<organism>
    <name type="scientific">Mus musculus</name>
    <name type="common">Mouse</name>
    <dbReference type="NCBI Taxonomy" id="10090"/>
    <lineage>
        <taxon>Eukaryota</taxon>
        <taxon>Metazoa</taxon>
        <taxon>Chordata</taxon>
        <taxon>Craniata</taxon>
        <taxon>Vertebrata</taxon>
        <taxon>Euteleostomi</taxon>
        <taxon>Mammalia</taxon>
        <taxon>Eutheria</taxon>
        <taxon>Euarchontoglires</taxon>
        <taxon>Glires</taxon>
        <taxon>Rodentia</taxon>
        <taxon>Myomorpha</taxon>
        <taxon>Muroidea</taxon>
        <taxon>Muridae</taxon>
        <taxon>Murinae</taxon>
        <taxon>Mus</taxon>
        <taxon>Mus</taxon>
    </lineage>
</organism>
<gene>
    <name type="primary">Ighg1</name>
    <name type="synonym">Igh-4</name>
</gene>
<proteinExistence type="evidence at protein level"/>
<reference key="1">
    <citation type="journal article" date="1979" name="Cell">
        <title>Cloning and complete nucleotide sequence of mouse immunoglobulin gamma 1 chain gene.</title>
        <authorList>
            <person name="Honjo T."/>
            <person name="Obata M."/>
            <person name="Yamawaki-Kataoka Y."/>
            <person name="Kataoka T."/>
            <person name="Kawakami T."/>
            <person name="Takahashi N."/>
            <person name="Mano Y."/>
        </authorList>
    </citation>
    <scope>NUCLEOTIDE SEQUENCE [GENOMIC DNA]</scope>
</reference>
<reference key="2">
    <citation type="journal article" date="1982" name="Proc. Natl. Acad. Sci. U.S.A.">
        <title>mRNA for surface immunoglobulin gamma chains encodes a highly conserved transmembrane sequence and a 28-residue intracellular domain.</title>
        <authorList>
            <person name="Tyler B.M."/>
            <person name="Cowman A.F."/>
            <person name="Gerondakis S.D."/>
            <person name="Adams J.M."/>
            <person name="Bernard O."/>
        </authorList>
    </citation>
    <scope>NUCLEOTIDE SEQUENCE [GENOMIC DNA] OF 323-393</scope>
</reference>
<reference key="3">
    <citation type="journal article" date="1981" name="Cell">
        <title>Gene segments encoding transmembrane carboxyl termini of immunoglobulin gamma chains.</title>
        <authorList>
            <person name="Rogers J."/>
            <person name="Choi E."/>
            <person name="Souza L."/>
            <person name="Carter C."/>
            <person name="Word C.J."/>
            <person name="Kuehl M."/>
            <person name="Eisenberg D."/>
            <person name="Wall R."/>
        </authorList>
    </citation>
    <scope>NUCLEOTIDE SEQUENCE [GENOMIC DNA] OF 323-366</scope>
</reference>
<reference key="4">
    <citation type="journal article" date="1982" name="Proc. Natl. Acad. Sci. U.S.A.">
        <title>Nucleotide sequences of gene segments encoding membrane domains of immunoglobulin gamma chains.</title>
        <authorList>
            <person name="Yamawaki-Kataoka Y."/>
            <person name="Nakai S."/>
            <person name="Miyata T."/>
            <person name="Honjo T."/>
        </authorList>
    </citation>
    <scope>NUCLEOTIDE SEQUENCE [GENOMIC DNA] OF 1-44</scope>
</reference>
<reference key="5">
    <citation type="journal article" date="2010" name="Cell">
        <title>A tissue-specific atlas of mouse protein phosphorylation and expression.</title>
        <authorList>
            <person name="Huttlin E.L."/>
            <person name="Jedrychowski M.P."/>
            <person name="Elias J.E."/>
            <person name="Goswami T."/>
            <person name="Rad R."/>
            <person name="Beausoleil S.A."/>
            <person name="Villen J."/>
            <person name="Haas W."/>
            <person name="Sowa M.E."/>
            <person name="Gygi S.P."/>
        </authorList>
    </citation>
    <scope>IDENTIFICATION BY MASS SPECTROMETRY [LARGE SCALE ANALYSIS]</scope>
    <source>
        <tissue>Brown adipose tissue</tissue>
        <tissue>Heart</tissue>
        <tissue>Kidney</tissue>
        <tissue>Liver</tissue>
        <tissue>Lung</tissue>
        <tissue>Spleen</tissue>
        <tissue>Testis</tissue>
    </source>
</reference>
<name>IGH1M_MOUSE</name>
<dbReference type="EMBL" id="J00453">
    <property type="status" value="NOT_ANNOTATED_CDS"/>
    <property type="molecule type" value="Genomic_DNA"/>
</dbReference>
<dbReference type="PIR" id="B02159">
    <property type="entry name" value="G1MSM"/>
</dbReference>
<dbReference type="PDB" id="15C8">
    <property type="method" value="X-ray"/>
    <property type="resolution" value="2.50 A"/>
    <property type="chains" value="H=1-98"/>
</dbReference>
<dbReference type="PDB" id="1A0Q">
    <property type="method" value="X-ray"/>
    <property type="resolution" value="2.30 A"/>
    <property type="chains" value="H=1-97"/>
</dbReference>
<dbReference type="PDB" id="1A3L">
    <property type="method" value="X-ray"/>
    <property type="resolution" value="1.95 A"/>
    <property type="chains" value="H=1-99"/>
</dbReference>
<dbReference type="PDB" id="1ACY">
    <property type="method" value="X-ray"/>
    <property type="resolution" value="3.00 A"/>
    <property type="chains" value="H=1-100"/>
</dbReference>
<dbReference type="PDB" id="1AE6">
    <property type="method" value="X-ray"/>
    <property type="resolution" value="3.00 A"/>
    <property type="chains" value="H=1-98"/>
</dbReference>
<dbReference type="PDB" id="1C12">
    <property type="method" value="X-ray"/>
    <property type="resolution" value="2.60 A"/>
    <property type="chains" value="B=1-99"/>
</dbReference>
<dbReference type="PDB" id="1CIC">
    <property type="method" value="X-ray"/>
    <property type="resolution" value="2.50 A"/>
    <property type="chains" value="D=1-102"/>
</dbReference>
<dbReference type="PDB" id="1CK0">
    <property type="method" value="X-ray"/>
    <property type="resolution" value="2.50 A"/>
    <property type="chains" value="H=1-98"/>
</dbReference>
<dbReference type="PDB" id="1CL7">
    <property type="method" value="X-ray"/>
    <property type="resolution" value="3.00 A"/>
    <property type="chains" value="I=21-102"/>
</dbReference>
<dbReference type="PDB" id="1F11">
    <property type="method" value="X-ray"/>
    <property type="resolution" value="3.00 A"/>
    <property type="chains" value="B/D=1-102"/>
</dbReference>
<dbReference type="PDB" id="1F58">
    <property type="method" value="X-ray"/>
    <property type="resolution" value="2.00 A"/>
    <property type="chains" value="H=1-102"/>
</dbReference>
<dbReference type="PDB" id="1IGY">
    <property type="method" value="X-ray"/>
    <property type="resolution" value="3.20 A"/>
    <property type="chains" value="B/D=1-320"/>
</dbReference>
<dbReference type="PDB" id="1JRH">
    <property type="method" value="X-ray"/>
    <property type="resolution" value="2.80 A"/>
    <property type="chains" value="H=1-97"/>
</dbReference>
<dbReference type="PDB" id="1KC5">
    <property type="method" value="X-ray"/>
    <property type="resolution" value="2.50 A"/>
    <property type="chains" value="H=1-101"/>
</dbReference>
<dbReference type="PDB" id="1KCR">
    <property type="method" value="X-ray"/>
    <property type="resolution" value="2.90 A"/>
    <property type="chains" value="H=1-102"/>
</dbReference>
<dbReference type="PDB" id="1KCU">
    <property type="method" value="X-ray"/>
    <property type="resolution" value="2.20 A"/>
    <property type="chains" value="H=1-101"/>
</dbReference>
<dbReference type="PDB" id="1KEN">
    <property type="method" value="X-ray"/>
    <property type="resolution" value="3.50 A"/>
    <property type="chains" value="H/T=1-101"/>
</dbReference>
<dbReference type="PDB" id="1ORS">
    <property type="method" value="X-ray"/>
    <property type="resolution" value="1.90 A"/>
    <property type="chains" value="B=1-103"/>
</dbReference>
<dbReference type="PDB" id="1QFU">
    <property type="method" value="X-ray"/>
    <property type="resolution" value="2.80 A"/>
    <property type="chains" value="H=1-101"/>
</dbReference>
<dbReference type="PDB" id="1S5I">
    <property type="method" value="X-ray"/>
    <property type="resolution" value="2.70 A"/>
    <property type="chains" value="H=1-102"/>
</dbReference>
<dbReference type="PDB" id="25C8">
    <property type="method" value="X-ray"/>
    <property type="resolution" value="2.00 A"/>
    <property type="chains" value="H=1-98"/>
</dbReference>
<dbReference type="PDB" id="2AJS">
    <property type="method" value="X-ray"/>
    <property type="resolution" value="1.70 A"/>
    <property type="chains" value="H=1-100"/>
</dbReference>
<dbReference type="PDB" id="2AJU">
    <property type="method" value="X-ray"/>
    <property type="resolution" value="1.50 A"/>
    <property type="chains" value="H=1-100"/>
</dbReference>
<dbReference type="PDB" id="2AJV">
    <property type="method" value="X-ray"/>
    <property type="resolution" value="1.50 A"/>
    <property type="chains" value="H=1-100"/>
</dbReference>
<dbReference type="PDB" id="2AJX">
    <property type="method" value="X-ray"/>
    <property type="resolution" value="1.85 A"/>
    <property type="chains" value="H=1-100"/>
</dbReference>
<dbReference type="PDB" id="2AJY">
    <property type="method" value="X-ray"/>
    <property type="resolution" value="2.10 A"/>
    <property type="chains" value="H=1-100"/>
</dbReference>
<dbReference type="PDB" id="2AJZ">
    <property type="method" value="X-ray"/>
    <property type="resolution" value="2.30 A"/>
    <property type="chains" value="B/H=1-100"/>
</dbReference>
<dbReference type="PDB" id="2AK1">
    <property type="method" value="X-ray"/>
    <property type="resolution" value="1.85 A"/>
    <property type="chains" value="H=1-100"/>
</dbReference>
<dbReference type="PDBsum" id="15C8"/>
<dbReference type="PDBsum" id="1A0Q"/>
<dbReference type="PDBsum" id="1A3L"/>
<dbReference type="PDBsum" id="1ACY"/>
<dbReference type="PDBsum" id="1AE6"/>
<dbReference type="PDBsum" id="1C12"/>
<dbReference type="PDBsum" id="1CIC"/>
<dbReference type="PDBsum" id="1CK0"/>
<dbReference type="PDBsum" id="1CL7"/>
<dbReference type="PDBsum" id="1F11"/>
<dbReference type="PDBsum" id="1F58"/>
<dbReference type="PDBsum" id="1IGY"/>
<dbReference type="PDBsum" id="1JRH"/>
<dbReference type="PDBsum" id="1KC5"/>
<dbReference type="PDBsum" id="1KCR"/>
<dbReference type="PDBsum" id="1KCU"/>
<dbReference type="PDBsum" id="1KEN"/>
<dbReference type="PDBsum" id="1ORS"/>
<dbReference type="PDBsum" id="1QFU"/>
<dbReference type="PDBsum" id="1S5I"/>
<dbReference type="PDBsum" id="25C8"/>
<dbReference type="PDBsum" id="2AJS"/>
<dbReference type="PDBsum" id="2AJU"/>
<dbReference type="PDBsum" id="2AJV"/>
<dbReference type="PDBsum" id="2AJX"/>
<dbReference type="PDBsum" id="2AJY"/>
<dbReference type="PDBsum" id="2AJZ"/>
<dbReference type="PDBsum" id="2AK1"/>
<dbReference type="EMDB" id="EMD-16480"/>
<dbReference type="EMDB" id="EMD-16481"/>
<dbReference type="EMDB" id="EMD-16490"/>
<dbReference type="SMR" id="P01869"/>
<dbReference type="FunCoup" id="P01869">
    <property type="interactions" value="67"/>
</dbReference>
<dbReference type="GlyCosmos" id="P01869">
    <property type="glycosylation" value="1 site, 7 glycans"/>
</dbReference>
<dbReference type="GlyGen" id="P01869">
    <property type="glycosylation" value="2 sites, 8 N-linked glycans (1 site), 1 O-linked glycan (1 site)"/>
</dbReference>
<dbReference type="iPTMnet" id="P01869"/>
<dbReference type="CPTAC" id="non-CPTAC-3532"/>
<dbReference type="CPTAC" id="non-CPTAC-3533"/>
<dbReference type="jPOST" id="P01869"/>
<dbReference type="ProteomicsDB" id="269383">
    <molecule id="P01869-1"/>
</dbReference>
<dbReference type="AGR" id="MGI:96446"/>
<dbReference type="MGI" id="MGI:96446">
    <property type="gene designation" value="Ighg1"/>
</dbReference>
<dbReference type="InParanoid" id="P01869"/>
<dbReference type="Reactome" id="R-MMU-166663">
    <property type="pathway name" value="Initial triggering of complement"/>
</dbReference>
<dbReference type="Reactome" id="R-MMU-173623">
    <property type="pathway name" value="Classical antibody-mediated complement activation"/>
</dbReference>
<dbReference type="Reactome" id="R-MMU-2029481">
    <property type="pathway name" value="FCGR activation"/>
</dbReference>
<dbReference type="Reactome" id="R-MMU-2029482">
    <property type="pathway name" value="Regulation of actin dynamics for phagocytic cup formation"/>
</dbReference>
<dbReference type="Reactome" id="R-MMU-2029485">
    <property type="pathway name" value="Role of phospholipids in phagocytosis"/>
</dbReference>
<dbReference type="Reactome" id="R-MMU-977606">
    <property type="pathway name" value="Regulation of Complement cascade"/>
</dbReference>
<dbReference type="ChiTaRS" id="Ighg1">
    <property type="organism name" value="mouse"/>
</dbReference>
<dbReference type="EvolutionaryTrace" id="P01869"/>
<dbReference type="Proteomes" id="UP000000589">
    <property type="component" value="Unplaced"/>
</dbReference>
<dbReference type="RNAct" id="P01869">
    <property type="molecule type" value="protein"/>
</dbReference>
<dbReference type="GO" id="GO:0005737">
    <property type="term" value="C:cytoplasm"/>
    <property type="evidence" value="ECO:0000314"/>
    <property type="project" value="MGI"/>
</dbReference>
<dbReference type="GO" id="GO:0009897">
    <property type="term" value="C:external side of plasma membrane"/>
    <property type="evidence" value="ECO:0000314"/>
    <property type="project" value="MGI"/>
</dbReference>
<dbReference type="GO" id="GO:0005615">
    <property type="term" value="C:extracellular space"/>
    <property type="evidence" value="ECO:0000314"/>
    <property type="project" value="MGI"/>
</dbReference>
<dbReference type="GO" id="GO:0042571">
    <property type="term" value="C:immunoglobulin complex, circulating"/>
    <property type="evidence" value="ECO:0000314"/>
    <property type="project" value="MGI"/>
</dbReference>
<dbReference type="GO" id="GO:0003823">
    <property type="term" value="F:antigen binding"/>
    <property type="evidence" value="ECO:0000314"/>
    <property type="project" value="MGI"/>
</dbReference>
<dbReference type="GO" id="GO:0034987">
    <property type="term" value="F:immunoglobulin receptor binding"/>
    <property type="evidence" value="ECO:0000353"/>
    <property type="project" value="AgBase"/>
</dbReference>
<dbReference type="GO" id="GO:0019731">
    <property type="term" value="P:antibacterial humoral response"/>
    <property type="evidence" value="ECO:0000314"/>
    <property type="project" value="MGI"/>
</dbReference>
<dbReference type="GO" id="GO:0001788">
    <property type="term" value="P:antibody-dependent cellular cytotoxicity"/>
    <property type="evidence" value="ECO:0000314"/>
    <property type="project" value="MGI"/>
</dbReference>
<dbReference type="GO" id="GO:0030183">
    <property type="term" value="P:B cell differentiation"/>
    <property type="evidence" value="ECO:0000315"/>
    <property type="project" value="MGI"/>
</dbReference>
<dbReference type="GO" id="GO:0006958">
    <property type="term" value="P:complement activation, classical pathway"/>
    <property type="evidence" value="ECO:0000314"/>
    <property type="project" value="MGI"/>
</dbReference>
<dbReference type="GO" id="GO:0042742">
    <property type="term" value="P:defense response to bacterium"/>
    <property type="evidence" value="ECO:0000314"/>
    <property type="project" value="MGI"/>
</dbReference>
<dbReference type="GO" id="GO:0002455">
    <property type="term" value="P:humoral immune response mediated by circulating immunoglobulin"/>
    <property type="evidence" value="ECO:0000314"/>
    <property type="project" value="MGI"/>
</dbReference>
<dbReference type="GO" id="GO:0016064">
    <property type="term" value="P:immunoglobulin mediated immune response"/>
    <property type="evidence" value="ECO:0000314"/>
    <property type="project" value="MGI"/>
</dbReference>
<dbReference type="GO" id="GO:0006911">
    <property type="term" value="P:phagocytosis, engulfment"/>
    <property type="evidence" value="ECO:0000314"/>
    <property type="project" value="MGI"/>
</dbReference>
<dbReference type="GO" id="GO:0006910">
    <property type="term" value="P:phagocytosis, recognition"/>
    <property type="evidence" value="ECO:0000314"/>
    <property type="project" value="MGI"/>
</dbReference>
<dbReference type="GO" id="GO:0050778">
    <property type="term" value="P:positive regulation of immune response"/>
    <property type="evidence" value="ECO:0000314"/>
    <property type="project" value="MGI"/>
</dbReference>
<dbReference type="GO" id="GO:0050766">
    <property type="term" value="P:positive regulation of phagocytosis"/>
    <property type="evidence" value="ECO:0000314"/>
    <property type="project" value="MGI"/>
</dbReference>
<dbReference type="GO" id="GO:0001812">
    <property type="term" value="P:positive regulation of type I hypersensitivity"/>
    <property type="evidence" value="ECO:0000314"/>
    <property type="project" value="MGI"/>
</dbReference>
<dbReference type="GO" id="GO:0001798">
    <property type="term" value="P:positive regulation of type IIa hypersensitivity"/>
    <property type="evidence" value="ECO:0000314"/>
    <property type="project" value="MGI"/>
</dbReference>
<dbReference type="CDD" id="cd21817">
    <property type="entry name" value="IgC1_CH1_IgEG"/>
    <property type="match status" value="1"/>
</dbReference>
<dbReference type="CDD" id="cd05768">
    <property type="entry name" value="IgC1_CH3_IgAGD_CH4_IgAEM"/>
    <property type="match status" value="1"/>
</dbReference>
<dbReference type="FunFam" id="2.60.40.10:FF:001739">
    <property type="entry name" value="Ig gamma-2A chain C region"/>
    <property type="match status" value="1"/>
</dbReference>
<dbReference type="FunFam" id="2.60.40.10:FF:000463">
    <property type="entry name" value="Immunoglobulin heavy constant gamma 1"/>
    <property type="match status" value="1"/>
</dbReference>
<dbReference type="FunFam" id="2.60.40.10:FF:001129">
    <property type="entry name" value="Immunoglobulin heavy constant gamma 1"/>
    <property type="match status" value="1"/>
</dbReference>
<dbReference type="Gene3D" id="2.60.40.10">
    <property type="entry name" value="Immunoglobulins"/>
    <property type="match status" value="3"/>
</dbReference>
<dbReference type="InterPro" id="IPR007110">
    <property type="entry name" value="Ig-like_dom"/>
</dbReference>
<dbReference type="InterPro" id="IPR036179">
    <property type="entry name" value="Ig-like_dom_sf"/>
</dbReference>
<dbReference type="InterPro" id="IPR013783">
    <property type="entry name" value="Ig-like_fold"/>
</dbReference>
<dbReference type="InterPro" id="IPR003597">
    <property type="entry name" value="Ig_C1-set"/>
</dbReference>
<dbReference type="InterPro" id="IPR050380">
    <property type="entry name" value="Immune_Resp_Modulators"/>
</dbReference>
<dbReference type="PANTHER" id="PTHR23411">
    <property type="entry name" value="TAPASIN"/>
    <property type="match status" value="1"/>
</dbReference>
<dbReference type="Pfam" id="PF07654">
    <property type="entry name" value="C1-set"/>
    <property type="match status" value="3"/>
</dbReference>
<dbReference type="SMART" id="SM00407">
    <property type="entry name" value="IGc1"/>
    <property type="match status" value="2"/>
</dbReference>
<dbReference type="SUPFAM" id="SSF48726">
    <property type="entry name" value="Immunoglobulin"/>
    <property type="match status" value="3"/>
</dbReference>
<dbReference type="PROSITE" id="PS50835">
    <property type="entry name" value="IG_LIKE"/>
    <property type="match status" value="3"/>
</dbReference>
<accession>P01869</accession>
<protein>
    <recommendedName>
        <fullName>Ig gamma-1 chain C region, membrane-bound form</fullName>
    </recommendedName>
</protein>
<evidence type="ECO:0000255" key="1"/>
<evidence type="ECO:0000305" key="2"/>
<evidence type="ECO:0007829" key="3">
    <source>
        <dbReference type="PDB" id="1CIC"/>
    </source>
</evidence>
<evidence type="ECO:0007829" key="4">
    <source>
        <dbReference type="PDB" id="1IGY"/>
    </source>
</evidence>
<evidence type="ECO:0007829" key="5">
    <source>
        <dbReference type="PDB" id="1ORS"/>
    </source>
</evidence>
<sequence>AKTTPPSVYPLAPGSAAQTNSMVTLGCLVKGYFPEPVTVTWNSGSLSSGVHTFPAVLQSDLYTLSSSVTVPSSPRPSETVTCNVAHPASSTKVDKKIVPRDCGCKPCICTVPEVSSVFIFPPKPKDVLTITLTPKVTCVVVDISKDDPEVQFSWFVDDVEVHTAQTQPREEQFNSTFRSVSELPIMHQDWLNGKEFKCRVNSAAFPAPIEKTISKTKGRPKAPQVYTIPPPKEQMAKDKVSLTCMITDFFPEDITVEWQWNGQPAENYKNTQPIMNTNGSYFVYSKLNVQKSNWEAGNTFTCSVLHEGLHNHHTEKSLSHSPGLQLDETCAEAQDGELDGLWTTITIFISLFLLSVCYSAAVTLFKVKWIFSSVVELKQTLVPEYKNMIGQAP</sequence>
<feature type="chain" id="PRO_0000153583" description="Ig gamma-1 chain C region, membrane-bound form">
    <location>
        <begin position="1" status="less than"/>
        <end position="393"/>
    </location>
</feature>
<feature type="transmembrane region" description="Helical" evidence="1">
    <location>
        <begin position="340"/>
        <end position="357"/>
    </location>
</feature>
<feature type="topological domain" description="Cytoplasmic" evidence="1">
    <location>
        <begin position="358"/>
        <end position="393"/>
    </location>
</feature>
<feature type="region of interest" description="CH1">
    <location>
        <begin position="1"/>
        <end position="97"/>
    </location>
</feature>
<feature type="region of interest" description="Hinge">
    <location>
        <begin position="98"/>
        <end position="110"/>
    </location>
</feature>
<feature type="region of interest" description="CH2">
    <location>
        <begin position="111"/>
        <end position="217"/>
    </location>
</feature>
<feature type="region of interest" description="CH3">
    <location>
        <begin position="218"/>
        <end position="324"/>
    </location>
</feature>
<feature type="glycosylation site" description="N-linked (GlcNAc...) asparagine">
    <location>
        <position position="174"/>
    </location>
</feature>
<feature type="disulfide bond">
    <location>
        <begin position="27"/>
        <end position="82"/>
    </location>
</feature>
<feature type="disulfide bond" description="Interchain (with a light chain)">
    <location>
        <position position="102"/>
    </location>
</feature>
<feature type="disulfide bond" description="Interchain (with a heavy chain)">
    <location>
        <position position="104"/>
    </location>
</feature>
<feature type="disulfide bond" description="Interchain (with a heavy chain)">
    <location>
        <position position="107"/>
    </location>
</feature>
<feature type="disulfide bond" description="Interchain (with a heavy chain)">
    <location>
        <position position="109"/>
    </location>
</feature>
<feature type="disulfide bond">
    <location>
        <begin position="138"/>
        <end position="198"/>
    </location>
</feature>
<feature type="disulfide bond">
    <location>
        <begin position="244"/>
        <end position="302"/>
    </location>
</feature>
<feature type="non-terminal residue">
    <location>
        <position position="1"/>
    </location>
</feature>
<feature type="strand" evidence="5">
    <location>
        <begin position="7"/>
        <end position="11"/>
    </location>
</feature>
<feature type="helix" evidence="3">
    <location>
        <begin position="15"/>
        <end position="19"/>
    </location>
</feature>
<feature type="strand" evidence="5">
    <location>
        <begin position="20"/>
        <end position="35"/>
    </location>
</feature>
<feature type="strand" evidence="5">
    <location>
        <begin position="38"/>
        <end position="41"/>
    </location>
</feature>
<feature type="helix" evidence="5">
    <location>
        <begin position="42"/>
        <end position="44"/>
    </location>
</feature>
<feature type="strand" evidence="5">
    <location>
        <begin position="50"/>
        <end position="52"/>
    </location>
</feature>
<feature type="strand" evidence="5">
    <location>
        <begin position="56"/>
        <end position="71"/>
    </location>
</feature>
<feature type="turn" evidence="5">
    <location>
        <begin position="72"/>
        <end position="77"/>
    </location>
</feature>
<feature type="strand" evidence="5">
    <location>
        <begin position="81"/>
        <end position="86"/>
    </location>
</feature>
<feature type="helix" evidence="5">
    <location>
        <begin position="87"/>
        <end position="89"/>
    </location>
</feature>
<feature type="strand" evidence="5">
    <location>
        <begin position="91"/>
        <end position="96"/>
    </location>
</feature>
<feature type="strand" evidence="4">
    <location>
        <begin position="112"/>
        <end position="114"/>
    </location>
</feature>
<feature type="strand" evidence="4">
    <location>
        <begin position="117"/>
        <end position="120"/>
    </location>
</feature>
<feature type="helix" evidence="4">
    <location>
        <begin position="124"/>
        <end position="128"/>
    </location>
</feature>
<feature type="strand" evidence="4">
    <location>
        <begin position="135"/>
        <end position="140"/>
    </location>
</feature>
<feature type="strand" evidence="4">
    <location>
        <begin position="154"/>
        <end position="158"/>
    </location>
</feature>
<feature type="strand" evidence="4">
    <location>
        <begin position="174"/>
        <end position="176"/>
    </location>
</feature>
<feature type="helix" evidence="4">
    <location>
        <begin position="187"/>
        <end position="192"/>
    </location>
</feature>
<feature type="strand" evidence="4">
    <location>
        <begin position="226"/>
        <end position="228"/>
    </location>
</feature>
<feature type="strand" evidence="4">
    <location>
        <begin position="232"/>
        <end position="250"/>
    </location>
</feature>
<feature type="strand" evidence="4">
    <location>
        <begin position="254"/>
        <end position="260"/>
    </location>
</feature>
<feature type="strand" evidence="4">
    <location>
        <begin position="277"/>
        <end position="279"/>
    </location>
</feature>
<feature type="strand" evidence="4">
    <location>
        <begin position="281"/>
        <end position="290"/>
    </location>
</feature>
<feature type="helix" evidence="4">
    <location>
        <begin position="291"/>
        <end position="295"/>
    </location>
</feature>
<feature type="strand" evidence="4">
    <location>
        <begin position="300"/>
        <end position="306"/>
    </location>
</feature>
<feature type="helix" evidence="4">
    <location>
        <begin position="310"/>
        <end position="312"/>
    </location>
</feature>
<feature type="strand" evidence="4">
    <location>
        <begin position="314"/>
        <end position="318"/>
    </location>
</feature>
<keyword id="KW-0002">3D-structure</keyword>
<keyword id="KW-0025">Alternative splicing</keyword>
<keyword id="KW-1003">Cell membrane</keyword>
<keyword id="KW-1015">Disulfide bond</keyword>
<keyword id="KW-0325">Glycoprotein</keyword>
<keyword id="KW-0393">Immunoglobulin domain</keyword>
<keyword id="KW-0472">Membrane</keyword>
<keyword id="KW-1185">Reference proteome</keyword>
<keyword id="KW-0812">Transmembrane</keyword>
<keyword id="KW-1133">Transmembrane helix</keyword>
<comment type="subcellular location">
    <subcellularLocation>
        <location evidence="2">Cell membrane</location>
        <topology evidence="2">Single-pass membrane protein</topology>
    </subcellularLocation>
</comment>
<comment type="alternative products">
    <event type="alternative splicing"/>
    <isoform>
        <id>P01869-1</id>
        <name>Membrane-bound</name>
        <sequence type="displayed"/>
    </isoform>
    <isoform>
        <id>P01868-1</id>
        <name>Secreted</name>
        <sequence type="external"/>
    </isoform>
</comment>